<dbReference type="EC" id="2.1.2.1" evidence="1"/>
<dbReference type="EMBL" id="BX248583">
    <property type="protein sequence ID" value="CAD83222.1"/>
    <property type="molecule type" value="Genomic_DNA"/>
</dbReference>
<dbReference type="SMR" id="Q7VRR4"/>
<dbReference type="STRING" id="203907.Bfl536"/>
<dbReference type="KEGG" id="bfl:Bfl536"/>
<dbReference type="eggNOG" id="COG0112">
    <property type="taxonomic scope" value="Bacteria"/>
</dbReference>
<dbReference type="HOGENOM" id="CLU_022477_2_1_6"/>
<dbReference type="OrthoDB" id="9803846at2"/>
<dbReference type="UniPathway" id="UPA00193"/>
<dbReference type="UniPathway" id="UPA00288">
    <property type="reaction ID" value="UER01023"/>
</dbReference>
<dbReference type="Proteomes" id="UP000002192">
    <property type="component" value="Chromosome"/>
</dbReference>
<dbReference type="GO" id="GO:0005829">
    <property type="term" value="C:cytosol"/>
    <property type="evidence" value="ECO:0007669"/>
    <property type="project" value="TreeGrafter"/>
</dbReference>
<dbReference type="GO" id="GO:0004372">
    <property type="term" value="F:glycine hydroxymethyltransferase activity"/>
    <property type="evidence" value="ECO:0007669"/>
    <property type="project" value="UniProtKB-UniRule"/>
</dbReference>
<dbReference type="GO" id="GO:0030170">
    <property type="term" value="F:pyridoxal phosphate binding"/>
    <property type="evidence" value="ECO:0007669"/>
    <property type="project" value="UniProtKB-UniRule"/>
</dbReference>
<dbReference type="GO" id="GO:0019264">
    <property type="term" value="P:glycine biosynthetic process from serine"/>
    <property type="evidence" value="ECO:0007669"/>
    <property type="project" value="UniProtKB-UniRule"/>
</dbReference>
<dbReference type="GO" id="GO:0035999">
    <property type="term" value="P:tetrahydrofolate interconversion"/>
    <property type="evidence" value="ECO:0007669"/>
    <property type="project" value="UniProtKB-UniRule"/>
</dbReference>
<dbReference type="CDD" id="cd00378">
    <property type="entry name" value="SHMT"/>
    <property type="match status" value="1"/>
</dbReference>
<dbReference type="FunFam" id="3.40.640.10:FF:000001">
    <property type="entry name" value="Serine hydroxymethyltransferase"/>
    <property type="match status" value="1"/>
</dbReference>
<dbReference type="Gene3D" id="3.90.1150.10">
    <property type="entry name" value="Aspartate Aminotransferase, domain 1"/>
    <property type="match status" value="1"/>
</dbReference>
<dbReference type="Gene3D" id="3.40.640.10">
    <property type="entry name" value="Type I PLP-dependent aspartate aminotransferase-like (Major domain)"/>
    <property type="match status" value="1"/>
</dbReference>
<dbReference type="HAMAP" id="MF_00051">
    <property type="entry name" value="SHMT"/>
    <property type="match status" value="1"/>
</dbReference>
<dbReference type="InterPro" id="IPR015424">
    <property type="entry name" value="PyrdxlP-dep_Trfase"/>
</dbReference>
<dbReference type="InterPro" id="IPR015421">
    <property type="entry name" value="PyrdxlP-dep_Trfase_major"/>
</dbReference>
<dbReference type="InterPro" id="IPR015422">
    <property type="entry name" value="PyrdxlP-dep_Trfase_small"/>
</dbReference>
<dbReference type="InterPro" id="IPR001085">
    <property type="entry name" value="Ser_HO-MeTrfase"/>
</dbReference>
<dbReference type="InterPro" id="IPR049943">
    <property type="entry name" value="Ser_HO-MeTrfase-like"/>
</dbReference>
<dbReference type="InterPro" id="IPR019798">
    <property type="entry name" value="Ser_HO-MeTrfase_PLP_BS"/>
</dbReference>
<dbReference type="InterPro" id="IPR039429">
    <property type="entry name" value="SHMT-like_dom"/>
</dbReference>
<dbReference type="NCBIfam" id="NF000586">
    <property type="entry name" value="PRK00011.1"/>
    <property type="match status" value="1"/>
</dbReference>
<dbReference type="PANTHER" id="PTHR11680">
    <property type="entry name" value="SERINE HYDROXYMETHYLTRANSFERASE"/>
    <property type="match status" value="1"/>
</dbReference>
<dbReference type="PANTHER" id="PTHR11680:SF50">
    <property type="entry name" value="SERINE HYDROXYMETHYLTRANSFERASE"/>
    <property type="match status" value="1"/>
</dbReference>
<dbReference type="Pfam" id="PF00464">
    <property type="entry name" value="SHMT"/>
    <property type="match status" value="1"/>
</dbReference>
<dbReference type="PIRSF" id="PIRSF000412">
    <property type="entry name" value="SHMT"/>
    <property type="match status" value="1"/>
</dbReference>
<dbReference type="SUPFAM" id="SSF53383">
    <property type="entry name" value="PLP-dependent transferases"/>
    <property type="match status" value="1"/>
</dbReference>
<dbReference type="PROSITE" id="PS00096">
    <property type="entry name" value="SHMT"/>
    <property type="match status" value="1"/>
</dbReference>
<evidence type="ECO:0000255" key="1">
    <source>
        <dbReference type="HAMAP-Rule" id="MF_00051"/>
    </source>
</evidence>
<gene>
    <name evidence="1" type="primary">glyA</name>
    <name type="ordered locus">Bfl536</name>
</gene>
<keyword id="KW-0028">Amino-acid biosynthesis</keyword>
<keyword id="KW-0963">Cytoplasm</keyword>
<keyword id="KW-0554">One-carbon metabolism</keyword>
<keyword id="KW-0663">Pyridoxal phosphate</keyword>
<keyword id="KW-1185">Reference proteome</keyword>
<keyword id="KW-0808">Transferase</keyword>
<protein>
    <recommendedName>
        <fullName evidence="1">Serine hydroxymethyltransferase</fullName>
        <shortName evidence="1">SHMT</shortName>
        <shortName evidence="1">Serine methylase</shortName>
        <ecNumber evidence="1">2.1.2.1</ecNumber>
    </recommendedName>
</protein>
<organism>
    <name type="scientific">Blochmanniella floridana</name>
    <dbReference type="NCBI Taxonomy" id="203907"/>
    <lineage>
        <taxon>Bacteria</taxon>
        <taxon>Pseudomonadati</taxon>
        <taxon>Pseudomonadota</taxon>
        <taxon>Gammaproteobacteria</taxon>
        <taxon>Enterobacterales</taxon>
        <taxon>Enterobacteriaceae</taxon>
        <taxon>ant endosymbionts</taxon>
        <taxon>Candidatus Blochmanniella</taxon>
    </lineage>
</organism>
<reference key="1">
    <citation type="journal article" date="2003" name="Proc. Natl. Acad. Sci. U.S.A.">
        <title>The genome sequence of Blochmannia floridanus: comparative analysis of reduced genomes.</title>
        <authorList>
            <person name="Gil R."/>
            <person name="Silva F.J."/>
            <person name="Zientz E."/>
            <person name="Delmotte F."/>
            <person name="Gonzalez-Candelas F."/>
            <person name="Latorre A."/>
            <person name="Rausell C."/>
            <person name="Kamerbeek J."/>
            <person name="Gadau J."/>
            <person name="Hoelldobler B."/>
            <person name="van Ham R.C.H.J."/>
            <person name="Gross R."/>
            <person name="Moya A."/>
        </authorList>
    </citation>
    <scope>NUCLEOTIDE SEQUENCE [LARGE SCALE GENOMIC DNA]</scope>
</reference>
<name>GLYA_BLOFL</name>
<comment type="function">
    <text evidence="1">Catalyzes the reversible interconversion of serine and glycine with tetrahydrofolate (THF) serving as the one-carbon carrier. This reaction serves as the major source of one-carbon groups required for the biosynthesis of purines, thymidylate, methionine, and other important biomolecules. Also exhibits THF-independent aldolase activity toward beta-hydroxyamino acids, producing glycine and aldehydes, via a retro-aldol mechanism.</text>
</comment>
<comment type="catalytic activity">
    <reaction evidence="1">
        <text>(6R)-5,10-methylene-5,6,7,8-tetrahydrofolate + glycine + H2O = (6S)-5,6,7,8-tetrahydrofolate + L-serine</text>
        <dbReference type="Rhea" id="RHEA:15481"/>
        <dbReference type="ChEBI" id="CHEBI:15377"/>
        <dbReference type="ChEBI" id="CHEBI:15636"/>
        <dbReference type="ChEBI" id="CHEBI:33384"/>
        <dbReference type="ChEBI" id="CHEBI:57305"/>
        <dbReference type="ChEBI" id="CHEBI:57453"/>
        <dbReference type="EC" id="2.1.2.1"/>
    </reaction>
</comment>
<comment type="cofactor">
    <cofactor evidence="1">
        <name>pyridoxal 5'-phosphate</name>
        <dbReference type="ChEBI" id="CHEBI:597326"/>
    </cofactor>
</comment>
<comment type="pathway">
    <text evidence="1">One-carbon metabolism; tetrahydrofolate interconversion.</text>
</comment>
<comment type="pathway">
    <text evidence="1">Amino-acid biosynthesis; glycine biosynthesis; glycine from L-serine: step 1/1.</text>
</comment>
<comment type="subunit">
    <text evidence="1">Homodimer.</text>
</comment>
<comment type="subcellular location">
    <subcellularLocation>
        <location evidence="1">Cytoplasm</location>
    </subcellularLocation>
</comment>
<comment type="similarity">
    <text evidence="1">Belongs to the SHMT family.</text>
</comment>
<feature type="chain" id="PRO_0000113556" description="Serine hydroxymethyltransferase">
    <location>
        <begin position="1"/>
        <end position="414"/>
    </location>
</feature>
<feature type="binding site" evidence="1">
    <location>
        <position position="118"/>
    </location>
    <ligand>
        <name>(6S)-5,6,7,8-tetrahydrofolate</name>
        <dbReference type="ChEBI" id="CHEBI:57453"/>
    </ligand>
</feature>
<feature type="binding site" evidence="1">
    <location>
        <begin position="122"/>
        <end position="124"/>
    </location>
    <ligand>
        <name>(6S)-5,6,7,8-tetrahydrofolate</name>
        <dbReference type="ChEBI" id="CHEBI:57453"/>
    </ligand>
</feature>
<feature type="binding site" evidence="1">
    <location>
        <begin position="353"/>
        <end position="355"/>
    </location>
    <ligand>
        <name>(6S)-5,6,7,8-tetrahydrofolate</name>
        <dbReference type="ChEBI" id="CHEBI:57453"/>
    </ligand>
</feature>
<feature type="site" description="Plays an important role in substrate specificity" evidence="1">
    <location>
        <position position="225"/>
    </location>
</feature>
<feature type="modified residue" description="N6-(pyridoxal phosphate)lysine" evidence="1">
    <location>
        <position position="226"/>
    </location>
</feature>
<proteinExistence type="inferred from homology"/>
<sequence length="414" mass="46428">MVYDIMDYDIELWDIVKKEINRQERHIDLVASENYISIQAMKAQGSQLTNKYAEGYPGKRYYGGCKYVDLIEQLAIDRAKVLFTAEYVNVQPHSGSQANFSVFNALLDPGDTILGMHLYHGGHLTHGSKVNFSGKLYKTIFYGVDKFGCIDYEQLCFLTERYRPKMIIGGFSAYSGIVDWARMRRIADSVGAYFFVDMAHIAGLVAAGVYPNPIPYAHVVTATTHKTLAGPRGGIILSNGDNDIEFYRKLDASVFPGSQGGPLMHVIAAKAVAFKEAMHVDFKRYQKQVIINSQKMAKEFLNNGFTVVSGIPYNHLFILDLTNHYITGKDASLVLERANIIVNKNCIPNDSHSPFITSGIRIGTAAVTRRGFNDNDVQEVARWICNILNDISNEKIILNAKKNVLDICYRHPVY</sequence>
<accession>Q7VRR4</accession>